<evidence type="ECO:0000255" key="1">
    <source>
        <dbReference type="HAMAP-Rule" id="MF_00150"/>
    </source>
</evidence>
<reference key="1">
    <citation type="journal article" date="2002" name="Science">
        <title>50 million years of genomic stasis in endosymbiotic bacteria.</title>
        <authorList>
            <person name="Tamas I."/>
            <person name="Klasson L."/>
            <person name="Canbaeck B."/>
            <person name="Naeslund A.K."/>
            <person name="Eriksson A.-S."/>
            <person name="Wernegreen J.J."/>
            <person name="Sandstroem J.P."/>
            <person name="Moran N.A."/>
            <person name="Andersson S.G.E."/>
        </authorList>
    </citation>
    <scope>NUCLEOTIDE SEQUENCE [LARGE SCALE GENOMIC DNA]</scope>
    <source>
        <strain>Sg</strain>
    </source>
</reference>
<proteinExistence type="inferred from homology"/>
<keyword id="KW-0028">Amino-acid biosynthesis</keyword>
<keyword id="KW-0055">Arginine biosynthesis</keyword>
<keyword id="KW-0963">Cytoplasm</keyword>
<keyword id="KW-0521">NADP</keyword>
<keyword id="KW-0560">Oxidoreductase</keyword>
<dbReference type="EC" id="1.2.1.38" evidence="1"/>
<dbReference type="EMBL" id="AE013218">
    <property type="protein sequence ID" value="AAM67616.1"/>
    <property type="molecule type" value="Genomic_DNA"/>
</dbReference>
<dbReference type="RefSeq" id="WP_011053582.1">
    <property type="nucleotide sequence ID" value="NC_004061.1"/>
</dbReference>
<dbReference type="SMR" id="Q8KA61"/>
<dbReference type="STRING" id="198804.BUsg_045"/>
<dbReference type="GeneID" id="93003512"/>
<dbReference type="KEGG" id="bas:BUsg_045"/>
<dbReference type="eggNOG" id="COG0002">
    <property type="taxonomic scope" value="Bacteria"/>
</dbReference>
<dbReference type="HOGENOM" id="CLU_006384_0_1_6"/>
<dbReference type="UniPathway" id="UPA00068">
    <property type="reaction ID" value="UER00108"/>
</dbReference>
<dbReference type="Proteomes" id="UP000000416">
    <property type="component" value="Chromosome"/>
</dbReference>
<dbReference type="GO" id="GO:0005737">
    <property type="term" value="C:cytoplasm"/>
    <property type="evidence" value="ECO:0007669"/>
    <property type="project" value="UniProtKB-SubCell"/>
</dbReference>
<dbReference type="GO" id="GO:0003942">
    <property type="term" value="F:N-acetyl-gamma-glutamyl-phosphate reductase activity"/>
    <property type="evidence" value="ECO:0007669"/>
    <property type="project" value="UniProtKB-UniRule"/>
</dbReference>
<dbReference type="GO" id="GO:0051287">
    <property type="term" value="F:NAD binding"/>
    <property type="evidence" value="ECO:0007669"/>
    <property type="project" value="InterPro"/>
</dbReference>
<dbReference type="GO" id="GO:0070401">
    <property type="term" value="F:NADP+ binding"/>
    <property type="evidence" value="ECO:0007669"/>
    <property type="project" value="InterPro"/>
</dbReference>
<dbReference type="GO" id="GO:0006526">
    <property type="term" value="P:L-arginine biosynthetic process"/>
    <property type="evidence" value="ECO:0007669"/>
    <property type="project" value="UniProtKB-UniRule"/>
</dbReference>
<dbReference type="CDD" id="cd23934">
    <property type="entry name" value="AGPR_1_C"/>
    <property type="match status" value="1"/>
</dbReference>
<dbReference type="CDD" id="cd17895">
    <property type="entry name" value="AGPR_1_N"/>
    <property type="match status" value="1"/>
</dbReference>
<dbReference type="FunFam" id="3.30.360.10:FF:000014">
    <property type="entry name" value="N-acetyl-gamma-glutamyl-phosphate reductase"/>
    <property type="match status" value="1"/>
</dbReference>
<dbReference type="Gene3D" id="3.30.360.10">
    <property type="entry name" value="Dihydrodipicolinate Reductase, domain 2"/>
    <property type="match status" value="1"/>
</dbReference>
<dbReference type="Gene3D" id="3.40.50.720">
    <property type="entry name" value="NAD(P)-binding Rossmann-like Domain"/>
    <property type="match status" value="1"/>
</dbReference>
<dbReference type="HAMAP" id="MF_00150">
    <property type="entry name" value="ArgC_type1"/>
    <property type="match status" value="1"/>
</dbReference>
<dbReference type="InterPro" id="IPR023013">
    <property type="entry name" value="AGPR_AS"/>
</dbReference>
<dbReference type="InterPro" id="IPR000706">
    <property type="entry name" value="AGPR_type-1"/>
</dbReference>
<dbReference type="InterPro" id="IPR036291">
    <property type="entry name" value="NAD(P)-bd_dom_sf"/>
</dbReference>
<dbReference type="InterPro" id="IPR050085">
    <property type="entry name" value="NAGSA_dehydrogenase"/>
</dbReference>
<dbReference type="InterPro" id="IPR000534">
    <property type="entry name" value="Semialdehyde_DH_NAD-bd"/>
</dbReference>
<dbReference type="NCBIfam" id="TIGR01850">
    <property type="entry name" value="argC"/>
    <property type="match status" value="1"/>
</dbReference>
<dbReference type="PANTHER" id="PTHR32338:SF10">
    <property type="entry name" value="N-ACETYL-GAMMA-GLUTAMYL-PHOSPHATE REDUCTASE, CHLOROPLASTIC-RELATED"/>
    <property type="match status" value="1"/>
</dbReference>
<dbReference type="PANTHER" id="PTHR32338">
    <property type="entry name" value="N-ACETYL-GAMMA-GLUTAMYL-PHOSPHATE REDUCTASE, CHLOROPLASTIC-RELATED-RELATED"/>
    <property type="match status" value="1"/>
</dbReference>
<dbReference type="Pfam" id="PF01118">
    <property type="entry name" value="Semialdhyde_dh"/>
    <property type="match status" value="1"/>
</dbReference>
<dbReference type="Pfam" id="PF22698">
    <property type="entry name" value="Semialdhyde_dhC_1"/>
    <property type="match status" value="1"/>
</dbReference>
<dbReference type="SMART" id="SM00859">
    <property type="entry name" value="Semialdhyde_dh"/>
    <property type="match status" value="1"/>
</dbReference>
<dbReference type="SUPFAM" id="SSF55347">
    <property type="entry name" value="Glyceraldehyde-3-phosphate dehydrogenase-like, C-terminal domain"/>
    <property type="match status" value="1"/>
</dbReference>
<dbReference type="SUPFAM" id="SSF51735">
    <property type="entry name" value="NAD(P)-binding Rossmann-fold domains"/>
    <property type="match status" value="1"/>
</dbReference>
<dbReference type="PROSITE" id="PS01224">
    <property type="entry name" value="ARGC"/>
    <property type="match status" value="1"/>
</dbReference>
<gene>
    <name evidence="1" type="primary">argC</name>
    <name type="ordered locus">BUsg_045</name>
</gene>
<sequence>MLNVLIVGASGYSGAELVNYINRHMFSKIKKIFVSENSSHIGKLFSELHQEFKNIIDLPFEAINYDTLIEKDIDAVFLATDHHVSYSLVPFFLSLNCVVFDLSGAYRVKNTDTYLKYYGFSHQHQDILKRSVYGLAEWNKQEIKKAELIAVPGCYATCIQLALKPLIKENFLNDEFIPIINAISGVSGAGRKANITNSFCEVSLHPYNVFTHRHTPEIIEHLGIPVIFIPHLGSFSRGILASITCKLKCNFTFQDIYNLYNTVYKEKPLIRVYEKNFPSIKAVVKLPFCDIGFIIQDKYIVIIAAEDNLLKGAAAQAIQCFNIRFGFSEIESII</sequence>
<feature type="chain" id="PRO_0000112392" description="N-acetyl-gamma-glutamyl-phosphate reductase">
    <location>
        <begin position="1"/>
        <end position="334"/>
    </location>
</feature>
<feature type="active site" evidence="1">
    <location>
        <position position="154"/>
    </location>
</feature>
<organism>
    <name type="scientific">Buchnera aphidicola subsp. Schizaphis graminum (strain Sg)</name>
    <dbReference type="NCBI Taxonomy" id="198804"/>
    <lineage>
        <taxon>Bacteria</taxon>
        <taxon>Pseudomonadati</taxon>
        <taxon>Pseudomonadota</taxon>
        <taxon>Gammaproteobacteria</taxon>
        <taxon>Enterobacterales</taxon>
        <taxon>Erwiniaceae</taxon>
        <taxon>Buchnera</taxon>
    </lineage>
</organism>
<comment type="function">
    <text evidence="1">Catalyzes the NADPH-dependent reduction of N-acetyl-5-glutamyl phosphate to yield N-acetyl-L-glutamate 5-semialdehyde.</text>
</comment>
<comment type="catalytic activity">
    <reaction evidence="1">
        <text>N-acetyl-L-glutamate 5-semialdehyde + phosphate + NADP(+) = N-acetyl-L-glutamyl 5-phosphate + NADPH + H(+)</text>
        <dbReference type="Rhea" id="RHEA:21588"/>
        <dbReference type="ChEBI" id="CHEBI:15378"/>
        <dbReference type="ChEBI" id="CHEBI:29123"/>
        <dbReference type="ChEBI" id="CHEBI:43474"/>
        <dbReference type="ChEBI" id="CHEBI:57783"/>
        <dbReference type="ChEBI" id="CHEBI:57936"/>
        <dbReference type="ChEBI" id="CHEBI:58349"/>
        <dbReference type="EC" id="1.2.1.38"/>
    </reaction>
</comment>
<comment type="pathway">
    <text evidence="1">Amino-acid biosynthesis; L-arginine biosynthesis; N(2)-acetyl-L-ornithine from L-glutamate: step 3/4.</text>
</comment>
<comment type="subcellular location">
    <subcellularLocation>
        <location evidence="1">Cytoplasm</location>
    </subcellularLocation>
</comment>
<comment type="similarity">
    <text evidence="1">Belongs to the NAGSA dehydrogenase family. Type 1 subfamily.</text>
</comment>
<name>ARGC_BUCAP</name>
<accession>Q8KA61</accession>
<protein>
    <recommendedName>
        <fullName evidence="1">N-acetyl-gamma-glutamyl-phosphate reductase</fullName>
        <shortName evidence="1">AGPR</shortName>
        <ecNumber evidence="1">1.2.1.38</ecNumber>
    </recommendedName>
    <alternativeName>
        <fullName evidence="1">N-acetyl-glutamate semialdehyde dehydrogenase</fullName>
        <shortName evidence="1">NAGSA dehydrogenase</shortName>
    </alternativeName>
</protein>